<reference key="1">
    <citation type="journal article" date="2005" name="J. Bacteriol.">
        <title>Insights on evolution of virulence and resistance from the complete genome analysis of an early methicillin-resistant Staphylococcus aureus strain and a biofilm-producing methicillin-resistant Staphylococcus epidermidis strain.</title>
        <authorList>
            <person name="Gill S.R."/>
            <person name="Fouts D.E."/>
            <person name="Archer G.L."/>
            <person name="Mongodin E.F."/>
            <person name="DeBoy R.T."/>
            <person name="Ravel J."/>
            <person name="Paulsen I.T."/>
            <person name="Kolonay J.F."/>
            <person name="Brinkac L.M."/>
            <person name="Beanan M.J."/>
            <person name="Dodson R.J."/>
            <person name="Daugherty S.C."/>
            <person name="Madupu R."/>
            <person name="Angiuoli S.V."/>
            <person name="Durkin A.S."/>
            <person name="Haft D.H."/>
            <person name="Vamathevan J.J."/>
            <person name="Khouri H."/>
            <person name="Utterback T.R."/>
            <person name="Lee C."/>
            <person name="Dimitrov G."/>
            <person name="Jiang L."/>
            <person name="Qin H."/>
            <person name="Weidman J."/>
            <person name="Tran K."/>
            <person name="Kang K.H."/>
            <person name="Hance I.R."/>
            <person name="Nelson K.E."/>
            <person name="Fraser C.M."/>
        </authorList>
    </citation>
    <scope>NUCLEOTIDE SEQUENCE [LARGE SCALE GENOMIC DNA]</scope>
    <source>
        <strain>COL</strain>
    </source>
</reference>
<name>DNLJ_STAAC</name>
<proteinExistence type="inferred from homology"/>
<dbReference type="EC" id="6.5.1.2" evidence="1"/>
<dbReference type="EMBL" id="CP000046">
    <property type="protein sequence ID" value="AAW36935.1"/>
    <property type="molecule type" value="Genomic_DNA"/>
</dbReference>
<dbReference type="RefSeq" id="WP_000774572.1">
    <property type="nucleotide sequence ID" value="NC_002951.2"/>
</dbReference>
<dbReference type="SMR" id="Q5HEL8"/>
<dbReference type="KEGG" id="sac:SACOL1965"/>
<dbReference type="HOGENOM" id="CLU_007764_2_1_9"/>
<dbReference type="Proteomes" id="UP000000530">
    <property type="component" value="Chromosome"/>
</dbReference>
<dbReference type="GO" id="GO:0005829">
    <property type="term" value="C:cytosol"/>
    <property type="evidence" value="ECO:0007669"/>
    <property type="project" value="TreeGrafter"/>
</dbReference>
<dbReference type="GO" id="GO:0003677">
    <property type="term" value="F:DNA binding"/>
    <property type="evidence" value="ECO:0007669"/>
    <property type="project" value="InterPro"/>
</dbReference>
<dbReference type="GO" id="GO:0003911">
    <property type="term" value="F:DNA ligase (NAD+) activity"/>
    <property type="evidence" value="ECO:0007669"/>
    <property type="project" value="UniProtKB-UniRule"/>
</dbReference>
<dbReference type="GO" id="GO:0046872">
    <property type="term" value="F:metal ion binding"/>
    <property type="evidence" value="ECO:0007669"/>
    <property type="project" value="UniProtKB-KW"/>
</dbReference>
<dbReference type="GO" id="GO:0006281">
    <property type="term" value="P:DNA repair"/>
    <property type="evidence" value="ECO:0007669"/>
    <property type="project" value="UniProtKB-KW"/>
</dbReference>
<dbReference type="GO" id="GO:0006260">
    <property type="term" value="P:DNA replication"/>
    <property type="evidence" value="ECO:0007669"/>
    <property type="project" value="UniProtKB-KW"/>
</dbReference>
<dbReference type="CDD" id="cd17748">
    <property type="entry name" value="BRCT_DNA_ligase_like"/>
    <property type="match status" value="1"/>
</dbReference>
<dbReference type="CDD" id="cd00114">
    <property type="entry name" value="LIGANc"/>
    <property type="match status" value="1"/>
</dbReference>
<dbReference type="FunFam" id="1.10.150.20:FF:000006">
    <property type="entry name" value="DNA ligase"/>
    <property type="match status" value="1"/>
</dbReference>
<dbReference type="FunFam" id="1.10.150.20:FF:000007">
    <property type="entry name" value="DNA ligase"/>
    <property type="match status" value="1"/>
</dbReference>
<dbReference type="FunFam" id="1.10.287.610:FF:000005">
    <property type="entry name" value="DNA ligase"/>
    <property type="match status" value="1"/>
</dbReference>
<dbReference type="FunFam" id="2.40.50.140:FF:000012">
    <property type="entry name" value="DNA ligase"/>
    <property type="match status" value="1"/>
</dbReference>
<dbReference type="FunFam" id="3.30.470.30:FF:000001">
    <property type="entry name" value="DNA ligase"/>
    <property type="match status" value="1"/>
</dbReference>
<dbReference type="FunFam" id="3.40.50.10190:FF:000045">
    <property type="entry name" value="DNA ligase"/>
    <property type="match status" value="1"/>
</dbReference>
<dbReference type="FunFam" id="6.20.10.30:FF:000002">
    <property type="entry name" value="DNA ligase"/>
    <property type="match status" value="1"/>
</dbReference>
<dbReference type="Gene3D" id="6.20.10.30">
    <property type="match status" value="1"/>
</dbReference>
<dbReference type="Gene3D" id="1.10.150.20">
    <property type="entry name" value="5' to 3' exonuclease, C-terminal subdomain"/>
    <property type="match status" value="2"/>
</dbReference>
<dbReference type="Gene3D" id="3.40.50.10190">
    <property type="entry name" value="BRCT domain"/>
    <property type="match status" value="1"/>
</dbReference>
<dbReference type="Gene3D" id="3.30.470.30">
    <property type="entry name" value="DNA ligase/mRNA capping enzyme"/>
    <property type="match status" value="1"/>
</dbReference>
<dbReference type="Gene3D" id="1.10.287.610">
    <property type="entry name" value="Helix hairpin bin"/>
    <property type="match status" value="1"/>
</dbReference>
<dbReference type="Gene3D" id="2.40.50.140">
    <property type="entry name" value="Nucleic acid-binding proteins"/>
    <property type="match status" value="1"/>
</dbReference>
<dbReference type="HAMAP" id="MF_01588">
    <property type="entry name" value="DNA_ligase_A"/>
    <property type="match status" value="1"/>
</dbReference>
<dbReference type="InterPro" id="IPR001357">
    <property type="entry name" value="BRCT_dom"/>
</dbReference>
<dbReference type="InterPro" id="IPR036420">
    <property type="entry name" value="BRCT_dom_sf"/>
</dbReference>
<dbReference type="InterPro" id="IPR041663">
    <property type="entry name" value="DisA/LigA_HHH"/>
</dbReference>
<dbReference type="InterPro" id="IPR001679">
    <property type="entry name" value="DNA_ligase"/>
</dbReference>
<dbReference type="InterPro" id="IPR018239">
    <property type="entry name" value="DNA_ligase_AS"/>
</dbReference>
<dbReference type="InterPro" id="IPR033136">
    <property type="entry name" value="DNA_ligase_CS"/>
</dbReference>
<dbReference type="InterPro" id="IPR013839">
    <property type="entry name" value="DNAligase_adenylation"/>
</dbReference>
<dbReference type="InterPro" id="IPR013840">
    <property type="entry name" value="DNAligase_N"/>
</dbReference>
<dbReference type="InterPro" id="IPR003583">
    <property type="entry name" value="Hlx-hairpin-Hlx_DNA-bd_motif"/>
</dbReference>
<dbReference type="InterPro" id="IPR012340">
    <property type="entry name" value="NA-bd_OB-fold"/>
</dbReference>
<dbReference type="InterPro" id="IPR004150">
    <property type="entry name" value="NAD_DNA_ligase_OB"/>
</dbReference>
<dbReference type="InterPro" id="IPR010994">
    <property type="entry name" value="RuvA_2-like"/>
</dbReference>
<dbReference type="InterPro" id="IPR004149">
    <property type="entry name" value="Znf_DNAligase_C4"/>
</dbReference>
<dbReference type="NCBIfam" id="TIGR00575">
    <property type="entry name" value="dnlj"/>
    <property type="match status" value="1"/>
</dbReference>
<dbReference type="NCBIfam" id="NF005932">
    <property type="entry name" value="PRK07956.1"/>
    <property type="match status" value="1"/>
</dbReference>
<dbReference type="PANTHER" id="PTHR23389">
    <property type="entry name" value="CHROMOSOME TRANSMISSION FIDELITY FACTOR 18"/>
    <property type="match status" value="1"/>
</dbReference>
<dbReference type="PANTHER" id="PTHR23389:SF9">
    <property type="entry name" value="DNA LIGASE"/>
    <property type="match status" value="1"/>
</dbReference>
<dbReference type="Pfam" id="PF00533">
    <property type="entry name" value="BRCT"/>
    <property type="match status" value="1"/>
</dbReference>
<dbReference type="Pfam" id="PF01653">
    <property type="entry name" value="DNA_ligase_aden"/>
    <property type="match status" value="1"/>
</dbReference>
<dbReference type="Pfam" id="PF03120">
    <property type="entry name" value="DNA_ligase_OB"/>
    <property type="match status" value="1"/>
</dbReference>
<dbReference type="Pfam" id="PF03119">
    <property type="entry name" value="DNA_ligase_ZBD"/>
    <property type="match status" value="1"/>
</dbReference>
<dbReference type="Pfam" id="PF12826">
    <property type="entry name" value="HHH_2"/>
    <property type="match status" value="1"/>
</dbReference>
<dbReference type="PIRSF" id="PIRSF001604">
    <property type="entry name" value="LigA"/>
    <property type="match status" value="1"/>
</dbReference>
<dbReference type="SMART" id="SM00292">
    <property type="entry name" value="BRCT"/>
    <property type="match status" value="1"/>
</dbReference>
<dbReference type="SMART" id="SM00278">
    <property type="entry name" value="HhH1"/>
    <property type="match status" value="3"/>
</dbReference>
<dbReference type="SMART" id="SM00532">
    <property type="entry name" value="LIGANc"/>
    <property type="match status" value="1"/>
</dbReference>
<dbReference type="SUPFAM" id="SSF52113">
    <property type="entry name" value="BRCT domain"/>
    <property type="match status" value="1"/>
</dbReference>
<dbReference type="SUPFAM" id="SSF56091">
    <property type="entry name" value="DNA ligase/mRNA capping enzyme, catalytic domain"/>
    <property type="match status" value="1"/>
</dbReference>
<dbReference type="SUPFAM" id="SSF50249">
    <property type="entry name" value="Nucleic acid-binding proteins"/>
    <property type="match status" value="1"/>
</dbReference>
<dbReference type="SUPFAM" id="SSF47781">
    <property type="entry name" value="RuvA domain 2-like"/>
    <property type="match status" value="1"/>
</dbReference>
<dbReference type="PROSITE" id="PS50172">
    <property type="entry name" value="BRCT"/>
    <property type="match status" value="1"/>
</dbReference>
<dbReference type="PROSITE" id="PS01055">
    <property type="entry name" value="DNA_LIGASE_N1"/>
    <property type="match status" value="1"/>
</dbReference>
<dbReference type="PROSITE" id="PS01056">
    <property type="entry name" value="DNA_LIGASE_N2"/>
    <property type="match status" value="1"/>
</dbReference>
<feature type="chain" id="PRO_0000161756" description="DNA ligase">
    <location>
        <begin position="1"/>
        <end position="667"/>
    </location>
</feature>
<feature type="domain" description="BRCT" evidence="1">
    <location>
        <begin position="586"/>
        <end position="667"/>
    </location>
</feature>
<feature type="active site" description="N6-AMP-lysine intermediate" evidence="1">
    <location>
        <position position="112"/>
    </location>
</feature>
<feature type="binding site" evidence="1">
    <location>
        <begin position="32"/>
        <end position="36"/>
    </location>
    <ligand>
        <name>NAD(+)</name>
        <dbReference type="ChEBI" id="CHEBI:57540"/>
    </ligand>
</feature>
<feature type="binding site" evidence="1">
    <location>
        <begin position="81"/>
        <end position="82"/>
    </location>
    <ligand>
        <name>NAD(+)</name>
        <dbReference type="ChEBI" id="CHEBI:57540"/>
    </ligand>
</feature>
<feature type="binding site" evidence="1">
    <location>
        <position position="110"/>
    </location>
    <ligand>
        <name>NAD(+)</name>
        <dbReference type="ChEBI" id="CHEBI:57540"/>
    </ligand>
</feature>
<feature type="binding site" evidence="1">
    <location>
        <position position="133"/>
    </location>
    <ligand>
        <name>NAD(+)</name>
        <dbReference type="ChEBI" id="CHEBI:57540"/>
    </ligand>
</feature>
<feature type="binding site" evidence="1">
    <location>
        <position position="167"/>
    </location>
    <ligand>
        <name>NAD(+)</name>
        <dbReference type="ChEBI" id="CHEBI:57540"/>
    </ligand>
</feature>
<feature type="binding site" evidence="1">
    <location>
        <position position="283"/>
    </location>
    <ligand>
        <name>NAD(+)</name>
        <dbReference type="ChEBI" id="CHEBI:57540"/>
    </ligand>
</feature>
<feature type="binding site" evidence="1">
    <location>
        <position position="307"/>
    </location>
    <ligand>
        <name>NAD(+)</name>
        <dbReference type="ChEBI" id="CHEBI:57540"/>
    </ligand>
</feature>
<feature type="binding site" evidence="1">
    <location>
        <position position="401"/>
    </location>
    <ligand>
        <name>Zn(2+)</name>
        <dbReference type="ChEBI" id="CHEBI:29105"/>
    </ligand>
</feature>
<feature type="binding site" evidence="1">
    <location>
        <position position="404"/>
    </location>
    <ligand>
        <name>Zn(2+)</name>
        <dbReference type="ChEBI" id="CHEBI:29105"/>
    </ligand>
</feature>
<feature type="binding site" evidence="1">
    <location>
        <position position="419"/>
    </location>
    <ligand>
        <name>Zn(2+)</name>
        <dbReference type="ChEBI" id="CHEBI:29105"/>
    </ligand>
</feature>
<feature type="binding site" evidence="1">
    <location>
        <position position="424"/>
    </location>
    <ligand>
        <name>Zn(2+)</name>
        <dbReference type="ChEBI" id="CHEBI:29105"/>
    </ligand>
</feature>
<keyword id="KW-0227">DNA damage</keyword>
<keyword id="KW-0234">DNA repair</keyword>
<keyword id="KW-0235">DNA replication</keyword>
<keyword id="KW-0436">Ligase</keyword>
<keyword id="KW-0460">Magnesium</keyword>
<keyword id="KW-0464">Manganese</keyword>
<keyword id="KW-0479">Metal-binding</keyword>
<keyword id="KW-0520">NAD</keyword>
<keyword id="KW-0862">Zinc</keyword>
<accession>Q5HEL8</accession>
<gene>
    <name evidence="1" type="primary">ligA</name>
    <name type="synonym">lig</name>
    <name type="ordered locus">SACOL1965</name>
</gene>
<protein>
    <recommendedName>
        <fullName evidence="1">DNA ligase</fullName>
        <ecNumber evidence="1">6.5.1.2</ecNumber>
    </recommendedName>
    <alternativeName>
        <fullName evidence="1">Polydeoxyribonucleotide synthase [NAD(+)]</fullName>
    </alternativeName>
</protein>
<organism>
    <name type="scientific">Staphylococcus aureus (strain COL)</name>
    <dbReference type="NCBI Taxonomy" id="93062"/>
    <lineage>
        <taxon>Bacteria</taxon>
        <taxon>Bacillati</taxon>
        <taxon>Bacillota</taxon>
        <taxon>Bacilli</taxon>
        <taxon>Bacillales</taxon>
        <taxon>Staphylococcaceae</taxon>
        <taxon>Staphylococcus</taxon>
    </lineage>
</organism>
<evidence type="ECO:0000255" key="1">
    <source>
        <dbReference type="HAMAP-Rule" id="MF_01588"/>
    </source>
</evidence>
<sequence>MADLSSRVNELHDLLNQYSYEYYVEDNPSVPDSEYDKLLHELIKIEEEHPEYKTVDSPTVRVGGEAQASFNKVNHDTPMLSLGNAFNEDDLRKFDQRIREQIGNVEYMCELKIDGLAVSLKYVDGYFVQGLTRGDGTTGEDITENLKTIHAIPLKMKEPLNVEVRGEAYMPRRSFLRLNEEKEKNDEQLFANPRNAAAGSLRQLDSKLTAKRKLSVFIYSVNDFTDFNARSQSEALDELNKLGFTTNKNRARVNNIDGVLEYIEKWTSQRESLPYDIDGIVIKVNDLDQQDEMGFTQKSPRWAIAYKFPAEEVVTKLLDIELSIGRTGVVTPTAILEPVKVAGTTVSRASLHNEDLIHDRDIRIGDSVVVKKAGDIIPEVVRSIPERRPEDAVTYHMPTHCPSCGHELVRIEGEVALRCINPKCQAQLVEGLIHFVSRQAMNIDGLGTKIIQQLYQSELIKDVADIFYLTEEDLLPLDRMGQKKVDNLLAAIQQAKDNSLENLLFGLGIRHLGVKASQVLAEKYETIDRLLTVTEAELVEIHDIGDKVAQSVVTYLENEDIRALIQKLKDKHVNMIYKGIKTSDIEGHPEFSGKTIVLTGKLHQMTRNEASKWLASQGAKVTSSVTKNTDVVIAGEDAGSKLTKAQSLGIEIWTEQQFVDKQNELNS</sequence>
<comment type="function">
    <text evidence="1">DNA ligase that catalyzes the formation of phosphodiester linkages between 5'-phosphoryl and 3'-hydroxyl groups in double-stranded DNA using NAD as a coenzyme and as the energy source for the reaction. It is essential for DNA replication and repair of damaged DNA.</text>
</comment>
<comment type="catalytic activity">
    <reaction evidence="1">
        <text>NAD(+) + (deoxyribonucleotide)n-3'-hydroxyl + 5'-phospho-(deoxyribonucleotide)m = (deoxyribonucleotide)n+m + AMP + beta-nicotinamide D-nucleotide.</text>
        <dbReference type="EC" id="6.5.1.2"/>
    </reaction>
</comment>
<comment type="cofactor">
    <cofactor evidence="1">
        <name>Mg(2+)</name>
        <dbReference type="ChEBI" id="CHEBI:18420"/>
    </cofactor>
    <cofactor evidence="1">
        <name>Mn(2+)</name>
        <dbReference type="ChEBI" id="CHEBI:29035"/>
    </cofactor>
</comment>
<comment type="similarity">
    <text evidence="1">Belongs to the NAD-dependent DNA ligase family. LigA subfamily.</text>
</comment>